<comment type="function">
    <text evidence="1">Located on the platform of the 30S subunit, it bridges several disparate RNA helices of the 16S rRNA. Forms part of the Shine-Dalgarno cleft in the 70S ribosome.</text>
</comment>
<comment type="subunit">
    <text evidence="1">Part of the 30S ribosomal subunit. Interacts with proteins S7 and S18. Binds to IF-3.</text>
</comment>
<comment type="similarity">
    <text evidence="1">Belongs to the universal ribosomal protein uS11 family.</text>
</comment>
<accession>A1T518</accession>
<reference key="1">
    <citation type="submission" date="2006-12" db="EMBL/GenBank/DDBJ databases">
        <title>Complete sequence of Mycobacterium vanbaalenii PYR-1.</title>
        <authorList>
            <consortium name="US DOE Joint Genome Institute"/>
            <person name="Copeland A."/>
            <person name="Lucas S."/>
            <person name="Lapidus A."/>
            <person name="Barry K."/>
            <person name="Detter J.C."/>
            <person name="Glavina del Rio T."/>
            <person name="Hammon N."/>
            <person name="Israni S."/>
            <person name="Dalin E."/>
            <person name="Tice H."/>
            <person name="Pitluck S."/>
            <person name="Singan V."/>
            <person name="Schmutz J."/>
            <person name="Larimer F."/>
            <person name="Land M."/>
            <person name="Hauser L."/>
            <person name="Kyrpides N."/>
            <person name="Anderson I.J."/>
            <person name="Miller C."/>
            <person name="Richardson P."/>
        </authorList>
    </citation>
    <scope>NUCLEOTIDE SEQUENCE [LARGE SCALE GENOMIC DNA]</scope>
    <source>
        <strain>DSM 7251 / JCM 13017 / BCRC 16820 / KCTC 9966 / NRRL B-24157 / PYR-1</strain>
    </source>
</reference>
<sequence>MAQAKKGGAPKKGQKTRRREKKNVPHGAAHIKSTFNNTIVSITDPQGNVIAWASSGHVGFKGSRKSTPFAAQLAAENAARKAQEHGVKKVDVFVKGPGSGRETAIRSLQAAGLEVGAISDVTPQPHNGCRPPKRRRV</sequence>
<evidence type="ECO:0000255" key="1">
    <source>
        <dbReference type="HAMAP-Rule" id="MF_01310"/>
    </source>
</evidence>
<evidence type="ECO:0000256" key="2">
    <source>
        <dbReference type="SAM" id="MobiDB-lite"/>
    </source>
</evidence>
<evidence type="ECO:0000305" key="3"/>
<protein>
    <recommendedName>
        <fullName evidence="1">Small ribosomal subunit protein uS11</fullName>
    </recommendedName>
    <alternativeName>
        <fullName evidence="3">30S ribosomal protein S11</fullName>
    </alternativeName>
</protein>
<gene>
    <name evidence="1" type="primary">rpsK</name>
    <name type="ordered locus">Mvan_1434</name>
</gene>
<dbReference type="EMBL" id="CP000511">
    <property type="protein sequence ID" value="ABM12268.1"/>
    <property type="molecule type" value="Genomic_DNA"/>
</dbReference>
<dbReference type="RefSeq" id="WP_011778694.1">
    <property type="nucleotide sequence ID" value="NZ_JACKSD010000066.1"/>
</dbReference>
<dbReference type="SMR" id="A1T518"/>
<dbReference type="STRING" id="350058.Mvan_1434"/>
<dbReference type="KEGG" id="mva:Mvan_1434"/>
<dbReference type="eggNOG" id="COG0100">
    <property type="taxonomic scope" value="Bacteria"/>
</dbReference>
<dbReference type="HOGENOM" id="CLU_072439_5_0_11"/>
<dbReference type="Proteomes" id="UP000009159">
    <property type="component" value="Chromosome"/>
</dbReference>
<dbReference type="GO" id="GO:1990904">
    <property type="term" value="C:ribonucleoprotein complex"/>
    <property type="evidence" value="ECO:0007669"/>
    <property type="project" value="UniProtKB-KW"/>
</dbReference>
<dbReference type="GO" id="GO:0005840">
    <property type="term" value="C:ribosome"/>
    <property type="evidence" value="ECO:0007669"/>
    <property type="project" value="UniProtKB-KW"/>
</dbReference>
<dbReference type="GO" id="GO:0019843">
    <property type="term" value="F:rRNA binding"/>
    <property type="evidence" value="ECO:0007669"/>
    <property type="project" value="UniProtKB-UniRule"/>
</dbReference>
<dbReference type="GO" id="GO:0003735">
    <property type="term" value="F:structural constituent of ribosome"/>
    <property type="evidence" value="ECO:0007669"/>
    <property type="project" value="InterPro"/>
</dbReference>
<dbReference type="GO" id="GO:0006412">
    <property type="term" value="P:translation"/>
    <property type="evidence" value="ECO:0007669"/>
    <property type="project" value="UniProtKB-UniRule"/>
</dbReference>
<dbReference type="FunFam" id="3.30.420.80:FF:000001">
    <property type="entry name" value="30S ribosomal protein S11"/>
    <property type="match status" value="1"/>
</dbReference>
<dbReference type="Gene3D" id="3.30.420.80">
    <property type="entry name" value="Ribosomal protein S11"/>
    <property type="match status" value="1"/>
</dbReference>
<dbReference type="HAMAP" id="MF_01310">
    <property type="entry name" value="Ribosomal_uS11"/>
    <property type="match status" value="1"/>
</dbReference>
<dbReference type="InterPro" id="IPR001971">
    <property type="entry name" value="Ribosomal_uS11"/>
</dbReference>
<dbReference type="InterPro" id="IPR019981">
    <property type="entry name" value="Ribosomal_uS11_bac-type"/>
</dbReference>
<dbReference type="InterPro" id="IPR018102">
    <property type="entry name" value="Ribosomal_uS11_CS"/>
</dbReference>
<dbReference type="InterPro" id="IPR036967">
    <property type="entry name" value="Ribosomal_uS11_sf"/>
</dbReference>
<dbReference type="NCBIfam" id="NF003698">
    <property type="entry name" value="PRK05309.1"/>
    <property type="match status" value="1"/>
</dbReference>
<dbReference type="NCBIfam" id="TIGR03632">
    <property type="entry name" value="uS11_bact"/>
    <property type="match status" value="1"/>
</dbReference>
<dbReference type="PANTHER" id="PTHR11759">
    <property type="entry name" value="40S RIBOSOMAL PROTEIN S14/30S RIBOSOMAL PROTEIN S11"/>
    <property type="match status" value="1"/>
</dbReference>
<dbReference type="Pfam" id="PF00411">
    <property type="entry name" value="Ribosomal_S11"/>
    <property type="match status" value="1"/>
</dbReference>
<dbReference type="PIRSF" id="PIRSF002131">
    <property type="entry name" value="Ribosomal_S11"/>
    <property type="match status" value="1"/>
</dbReference>
<dbReference type="SUPFAM" id="SSF53137">
    <property type="entry name" value="Translational machinery components"/>
    <property type="match status" value="1"/>
</dbReference>
<dbReference type="PROSITE" id="PS00054">
    <property type="entry name" value="RIBOSOMAL_S11"/>
    <property type="match status" value="1"/>
</dbReference>
<keyword id="KW-0687">Ribonucleoprotein</keyword>
<keyword id="KW-0689">Ribosomal protein</keyword>
<keyword id="KW-0694">RNA-binding</keyword>
<keyword id="KW-0699">rRNA-binding</keyword>
<name>RS11_MYCVP</name>
<feature type="chain" id="PRO_0000294801" description="Small ribosomal subunit protein uS11">
    <location>
        <begin position="1"/>
        <end position="137"/>
    </location>
</feature>
<feature type="region of interest" description="Disordered" evidence="2">
    <location>
        <begin position="1"/>
        <end position="30"/>
    </location>
</feature>
<feature type="compositionally biased region" description="Basic residues" evidence="2">
    <location>
        <begin position="8"/>
        <end position="21"/>
    </location>
</feature>
<organism>
    <name type="scientific">Mycolicibacterium vanbaalenii (strain DSM 7251 / JCM 13017 / BCRC 16820 / KCTC 9966 / NRRL B-24157 / PYR-1)</name>
    <name type="common">Mycobacterium vanbaalenii</name>
    <dbReference type="NCBI Taxonomy" id="350058"/>
    <lineage>
        <taxon>Bacteria</taxon>
        <taxon>Bacillati</taxon>
        <taxon>Actinomycetota</taxon>
        <taxon>Actinomycetes</taxon>
        <taxon>Mycobacteriales</taxon>
        <taxon>Mycobacteriaceae</taxon>
        <taxon>Mycolicibacterium</taxon>
    </lineage>
</organism>
<proteinExistence type="inferred from homology"/>